<keyword id="KW-0025">Alternative splicing</keyword>
<keyword id="KW-0966">Cell projection</keyword>
<keyword id="KW-0969">Cilium</keyword>
<keyword id="KW-0175">Coiled coil</keyword>
<keyword id="KW-0963">Cytoplasm</keyword>
<keyword id="KW-0206">Cytoskeleton</keyword>
<keyword id="KW-0221">Differentiation</keyword>
<keyword id="KW-0282">Flagellum</keyword>
<keyword id="KW-1185">Reference proteome</keyword>
<keyword id="KW-0744">Spermatogenesis</keyword>
<organism>
    <name type="scientific">Mus musculus</name>
    <name type="common">Mouse</name>
    <dbReference type="NCBI Taxonomy" id="10090"/>
    <lineage>
        <taxon>Eukaryota</taxon>
        <taxon>Metazoa</taxon>
        <taxon>Chordata</taxon>
        <taxon>Craniata</taxon>
        <taxon>Vertebrata</taxon>
        <taxon>Euteleostomi</taxon>
        <taxon>Mammalia</taxon>
        <taxon>Eutheria</taxon>
        <taxon>Euarchontoglires</taxon>
        <taxon>Glires</taxon>
        <taxon>Rodentia</taxon>
        <taxon>Myomorpha</taxon>
        <taxon>Muroidea</taxon>
        <taxon>Muridae</taxon>
        <taxon>Murinae</taxon>
        <taxon>Mus</taxon>
        <taxon>Mus</taxon>
    </lineage>
</organism>
<accession>Q6V3W6</accession>
<accession>G3X9B0</accession>
<accession>Q148T2</accession>
<protein>
    <recommendedName>
        <fullName>Dynein regulatory complex subunit 7</fullName>
    </recommendedName>
    <alternativeName>
        <fullName>Coiled-coil domain-containing protein 135</fullName>
    </alternativeName>
    <alternativeName>
        <fullName>Coiled-coil domain-containing protein lobo homolog</fullName>
    </alternativeName>
    <alternativeName>
        <fullName>Spermatogenesis-related gene in late stages of spermatogenesis cells protein</fullName>
    </alternativeName>
</protein>
<dbReference type="EMBL" id="AY352586">
    <property type="protein sequence ID" value="AAQ55489.2"/>
    <property type="molecule type" value="mRNA"/>
</dbReference>
<dbReference type="EMBL" id="AC103935">
    <property type="status" value="NOT_ANNOTATED_CDS"/>
    <property type="molecule type" value="Genomic_DNA"/>
</dbReference>
<dbReference type="EMBL" id="CH466525">
    <property type="protein sequence ID" value="EDL11157.1"/>
    <property type="molecule type" value="Genomic_DNA"/>
</dbReference>
<dbReference type="EMBL" id="BC117982">
    <property type="protein sequence ID" value="AAI17983.1"/>
    <property type="molecule type" value="mRNA"/>
</dbReference>
<dbReference type="EMBL" id="BC117983">
    <property type="protein sequence ID" value="AAI17984.1"/>
    <property type="molecule type" value="mRNA"/>
</dbReference>
<dbReference type="CCDS" id="CCDS40444.1">
    <molecule id="Q6V3W6-1"/>
</dbReference>
<dbReference type="RefSeq" id="NP_001036180.2">
    <molecule id="Q6V3W6-1"/>
    <property type="nucleotide sequence ID" value="NM_001042715.3"/>
</dbReference>
<dbReference type="RefSeq" id="XP_006531195.1">
    <molecule id="Q6V3W6-1"/>
    <property type="nucleotide sequence ID" value="XM_006531132.3"/>
</dbReference>
<dbReference type="SMR" id="Q6V3W6"/>
<dbReference type="FunCoup" id="Q6V3W6">
    <property type="interactions" value="53"/>
</dbReference>
<dbReference type="STRING" id="10090.ENSMUSP00000053972"/>
<dbReference type="iPTMnet" id="Q6V3W6"/>
<dbReference type="PhosphoSitePlus" id="Q6V3W6"/>
<dbReference type="SwissPalm" id="Q6V3W6"/>
<dbReference type="PaxDb" id="10090-ENSMUSP00000053972"/>
<dbReference type="ProteomicsDB" id="279575">
    <molecule id="Q6V3W6-1"/>
</dbReference>
<dbReference type="ProteomicsDB" id="279576">
    <molecule id="Q6V3W6-2"/>
</dbReference>
<dbReference type="Antibodypedia" id="49050">
    <property type="antibodies" value="74 antibodies from 12 providers"/>
</dbReference>
<dbReference type="DNASU" id="330830"/>
<dbReference type="Ensembl" id="ENSMUST00000058479.7">
    <molecule id="Q6V3W6-1"/>
    <property type="protein sequence ID" value="ENSMUSP00000053972.7"/>
    <property type="gene ID" value="ENSMUSG00000031786.8"/>
</dbReference>
<dbReference type="GeneID" id="330830"/>
<dbReference type="KEGG" id="mmu:330830"/>
<dbReference type="UCSC" id="uc009mxr.1">
    <molecule id="Q6V3W6-2"/>
    <property type="organism name" value="mouse"/>
</dbReference>
<dbReference type="UCSC" id="uc009mxs.1">
    <molecule id="Q6V3W6-1"/>
    <property type="organism name" value="mouse"/>
</dbReference>
<dbReference type="AGR" id="MGI:2685616"/>
<dbReference type="CTD" id="84229"/>
<dbReference type="MGI" id="MGI:2685616">
    <property type="gene designation" value="Drc7"/>
</dbReference>
<dbReference type="VEuPathDB" id="HostDB:ENSMUSG00000031786"/>
<dbReference type="eggNOG" id="ENOG502QRNZ">
    <property type="taxonomic scope" value="Eukaryota"/>
</dbReference>
<dbReference type="GeneTree" id="ENSGT00390000004913"/>
<dbReference type="HOGENOM" id="CLU_016052_0_0_1"/>
<dbReference type="InParanoid" id="Q6V3W6"/>
<dbReference type="OMA" id="CRDDYIT"/>
<dbReference type="OrthoDB" id="10262874at2759"/>
<dbReference type="PhylomeDB" id="Q6V3W6"/>
<dbReference type="TreeFam" id="TF323665"/>
<dbReference type="BioGRID-ORCS" id="330830">
    <property type="hits" value="4 hits in 77 CRISPR screens"/>
</dbReference>
<dbReference type="PRO" id="PR:Q6V3W6"/>
<dbReference type="Proteomes" id="UP000000589">
    <property type="component" value="Chromosome 8"/>
</dbReference>
<dbReference type="RNAct" id="Q6V3W6">
    <property type="molecule type" value="protein"/>
</dbReference>
<dbReference type="Bgee" id="ENSMUSG00000031786">
    <property type="expression patterns" value="Expressed in vasculature of organ and 33 other cell types or tissues"/>
</dbReference>
<dbReference type="GO" id="GO:0005737">
    <property type="term" value="C:cytoplasm"/>
    <property type="evidence" value="ECO:0007669"/>
    <property type="project" value="UniProtKB-KW"/>
</dbReference>
<dbReference type="GO" id="GO:0005856">
    <property type="term" value="C:cytoskeleton"/>
    <property type="evidence" value="ECO:0007669"/>
    <property type="project" value="UniProtKB-KW"/>
</dbReference>
<dbReference type="GO" id="GO:0031514">
    <property type="term" value="C:motile cilium"/>
    <property type="evidence" value="ECO:0007669"/>
    <property type="project" value="UniProtKB-SubCell"/>
</dbReference>
<dbReference type="GO" id="GO:0030317">
    <property type="term" value="P:flagellated sperm motility"/>
    <property type="evidence" value="ECO:0000315"/>
    <property type="project" value="UniProtKB"/>
</dbReference>
<dbReference type="GO" id="GO:0007288">
    <property type="term" value="P:sperm axoneme assembly"/>
    <property type="evidence" value="ECO:0000315"/>
    <property type="project" value="UniProtKB"/>
</dbReference>
<dbReference type="GO" id="GO:0007283">
    <property type="term" value="P:spermatogenesis"/>
    <property type="evidence" value="ECO:0000315"/>
    <property type="project" value="UniProtKB"/>
</dbReference>
<dbReference type="InterPro" id="IPR056290">
    <property type="entry name" value="CEPT76/DRC7_peptidase-like_dom"/>
</dbReference>
<dbReference type="InterPro" id="IPR033551">
    <property type="entry name" value="DRC7/lobo"/>
</dbReference>
<dbReference type="InterPro" id="IPR056292">
    <property type="entry name" value="DRC7_C"/>
</dbReference>
<dbReference type="InterPro" id="IPR056291">
    <property type="entry name" value="MORN_DRC7"/>
</dbReference>
<dbReference type="InterPro" id="IPR038765">
    <property type="entry name" value="Papain-like_cys_pep_sf"/>
</dbReference>
<dbReference type="PANTHER" id="PTHR35249">
    <property type="entry name" value="DYNEIN REGULATORY COMPLEX SUBUNIT 7"/>
    <property type="match status" value="1"/>
</dbReference>
<dbReference type="PANTHER" id="PTHR35249:SF2">
    <property type="entry name" value="DYNEIN REGULATORY COMPLEX SUBUNIT 7"/>
    <property type="match status" value="1"/>
</dbReference>
<dbReference type="Pfam" id="PF24656">
    <property type="entry name" value="CEPT76_peptidase"/>
    <property type="match status" value="1"/>
</dbReference>
<dbReference type="Pfam" id="PF24671">
    <property type="entry name" value="DRC7_C"/>
    <property type="match status" value="1"/>
</dbReference>
<dbReference type="Pfam" id="PF24667">
    <property type="entry name" value="MORN_DRC7"/>
    <property type="match status" value="1"/>
</dbReference>
<dbReference type="SUPFAM" id="SSF54001">
    <property type="entry name" value="Cysteine proteinases"/>
    <property type="match status" value="1"/>
</dbReference>
<gene>
    <name type="primary">Drc7</name>
    <name type="synonym">Ccdc135</name>
    <name type="synonym">Gm770</name>
    <name type="synonym">Srgl</name>
</gene>
<name>DRC7_MOUSE</name>
<reference key="1">
    <citation type="journal article" date="2004" name="Acta Biochim. Biophys. Sin.">
        <title>Cloning and characterization of a novel gene SRG-L expressed in late stages of mouse spermatogenic cells.</title>
        <authorList>
            <person name="Guo R."/>
            <person name="Ma P.P."/>
            <person name="Ma J."/>
            <person name="Ge Y.H."/>
            <person name="Xue S.P."/>
            <person name="Han D.S."/>
        </authorList>
    </citation>
    <scope>NUCLEOTIDE SEQUENCE [MRNA] (ISOFORM 1)</scope>
    <scope>TISSUE SPECIFICITY</scope>
    <source>
        <strain>BALB/cJ</strain>
        <tissue>Testis</tissue>
    </source>
</reference>
<reference key="2">
    <citation type="journal article" date="2006" name="Mol. Reprod. Dev.">
        <title>Molecular cloning and characterization of SRG-L, a novel mouse gene developmentally expressed in spermatogenic cells.</title>
        <authorList>
            <person name="Ma Q."/>
            <person name="Wang H."/>
            <person name="Guo R."/>
            <person name="Wang H."/>
            <person name="Ge Y."/>
            <person name="Ma J."/>
            <person name="Xue S."/>
            <person name="Han D."/>
        </authorList>
    </citation>
    <scope>NUCLEOTIDE SEQUENCE [MRNA] (ISOFORM 1)</scope>
    <scope>TISSUE SPECIFICITY</scope>
    <source>
        <strain>BALB/cJ</strain>
        <tissue>Testis</tissue>
    </source>
</reference>
<reference key="3">
    <citation type="journal article" date="2009" name="PLoS Biol.">
        <title>Lineage-specific biology revealed by a finished genome assembly of the mouse.</title>
        <authorList>
            <person name="Church D.M."/>
            <person name="Goodstadt L."/>
            <person name="Hillier L.W."/>
            <person name="Zody M.C."/>
            <person name="Goldstein S."/>
            <person name="She X."/>
            <person name="Bult C.J."/>
            <person name="Agarwala R."/>
            <person name="Cherry J.L."/>
            <person name="DiCuccio M."/>
            <person name="Hlavina W."/>
            <person name="Kapustin Y."/>
            <person name="Meric P."/>
            <person name="Maglott D."/>
            <person name="Birtle Z."/>
            <person name="Marques A.C."/>
            <person name="Graves T."/>
            <person name="Zhou S."/>
            <person name="Teague B."/>
            <person name="Potamousis K."/>
            <person name="Churas C."/>
            <person name="Place M."/>
            <person name="Herschleb J."/>
            <person name="Runnheim R."/>
            <person name="Forrest D."/>
            <person name="Amos-Landgraf J."/>
            <person name="Schwartz D.C."/>
            <person name="Cheng Z."/>
            <person name="Lindblad-Toh K."/>
            <person name="Eichler E.E."/>
            <person name="Ponting C.P."/>
        </authorList>
    </citation>
    <scope>NUCLEOTIDE SEQUENCE [LARGE SCALE GENOMIC DNA]</scope>
    <source>
        <strain>C57BL/6J</strain>
    </source>
</reference>
<reference key="4">
    <citation type="submission" date="2005-07" db="EMBL/GenBank/DDBJ databases">
        <authorList>
            <person name="Mural R.J."/>
            <person name="Adams M.D."/>
            <person name="Myers E.W."/>
            <person name="Smith H.O."/>
            <person name="Venter J.C."/>
        </authorList>
    </citation>
    <scope>NUCLEOTIDE SEQUENCE [LARGE SCALE GENOMIC DNA]</scope>
</reference>
<reference key="5">
    <citation type="journal article" date="2004" name="Genome Res.">
        <title>The status, quality, and expansion of the NIH full-length cDNA project: the Mammalian Gene Collection (MGC).</title>
        <authorList>
            <consortium name="The MGC Project Team"/>
        </authorList>
    </citation>
    <scope>NUCLEOTIDE SEQUENCE [LARGE SCALE MRNA] (ISOFORM 2)</scope>
</reference>
<reference key="6">
    <citation type="journal article" date="2008" name="Physiol. Genomics">
        <title>Tissue expression patterns identify mouse cilia genes.</title>
        <authorList>
            <person name="McClintock T.S."/>
            <person name="Glasser C.E."/>
            <person name="Bose S.C."/>
            <person name="Bergman D.A."/>
        </authorList>
    </citation>
    <scope>TISSUE SPECIFICITY</scope>
</reference>
<reference key="7">
    <citation type="journal article" date="2010" name="Cell">
        <title>A tissue-specific atlas of mouse protein phosphorylation and expression.</title>
        <authorList>
            <person name="Huttlin E.L."/>
            <person name="Jedrychowski M.P."/>
            <person name="Elias J.E."/>
            <person name="Goswami T."/>
            <person name="Rad R."/>
            <person name="Beausoleil S.A."/>
            <person name="Villen J."/>
            <person name="Haas W."/>
            <person name="Sowa M.E."/>
            <person name="Gygi S.P."/>
        </authorList>
    </citation>
    <scope>IDENTIFICATION BY MASS SPECTROMETRY [LARGE SCALE ANALYSIS]</scope>
    <source>
        <tissue>Testis</tissue>
    </source>
</reference>
<reference key="8">
    <citation type="journal article" date="2017" name="Proc. Natl. Acad. Sci. U.S.A.">
        <title>TCTE1 is a conserved component of the dynein regulatory complex and is required for motility and metabolism in mouse spermatozoa.</title>
        <authorList>
            <person name="Castaneda J.M."/>
            <person name="Hua R."/>
            <person name="Miyata H."/>
            <person name="Oji A."/>
            <person name="Guo Y."/>
            <person name="Cheng Y."/>
            <person name="Zhou T."/>
            <person name="Guo X."/>
            <person name="Cui Y."/>
            <person name="Shen B."/>
            <person name="Wang Z."/>
            <person name="Hu Z."/>
            <person name="Zhou Z."/>
            <person name="Sha J."/>
            <person name="Prunskaite-Hyyrylainen R."/>
            <person name="Yu Z."/>
            <person name="Ramirez-Solis R."/>
            <person name="Ikawa M."/>
            <person name="Matzuk M.M."/>
            <person name="Liu M."/>
        </authorList>
    </citation>
    <scope>INTERACTION WITH TCTE1</scope>
</reference>
<reference key="9">
    <citation type="journal article" date="2020" name="PLoS Genet.">
        <title>Nexin-Dynein regulatory complex component DRC7 but not FBXL13 is required for sperm flagellum formation and male fertility in mice.</title>
        <authorList>
            <person name="Morohoshi A."/>
            <person name="Miyata H."/>
            <person name="Shimada K."/>
            <person name="Nozawa K."/>
            <person name="Matsumura T."/>
            <person name="Yanase R."/>
            <person name="Shiba K."/>
            <person name="Inaba K."/>
            <person name="Ikawa M."/>
        </authorList>
    </citation>
    <scope>FUNCTION</scope>
    <scope>DISRUPTION PHENOTYPE</scope>
    <scope>TISSUE SPECIFICITY</scope>
    <scope>INTERACTION WITH TTCE1; DRC3 AND GAS8</scope>
</reference>
<sequence>MEVLREKVEEEEEAEREEAAERAERTEKLERVTKSAEVSREGTILSQDELRDLEGKLMAIEIPTQADHSVISQAPVDVTKLPPSYTTNSLKEEHLLLVADNFSRQYSHLCPDRVPLFLHPLNECNVPKFVSTTLRPTLMPYPELYNWDSCAQFVSDFLTMVPLVDPLKPPTHLYSSTTVLKCQKGNCFDFSTLLCSMLIGSGYDAYCVNGYGSLDLCLMDLTREVCPLTVKAKEIVKKKEKTVPKKYSIKPPRDLTSKFEQEQEEKRIQEIKDLEQRRLKEEEDRILEAEKAKPDPLHGLRVHSWVLVLAGKREVPESFFIDPLTARSYSTKDEHFLGIESLWNHKNYWINMQDCWNCCKDLIFDLGDPVRWEYMLLGTDKPHLSLTEEDEEGLDDDDDDVEDLGKEEEDKSFDMPSSWVSQIEITPEEFETRCPSGKKVIQYKKAQLEKWSPYLNNNGLVCRLTTYEDQQCTKVLEIKEWYQNREDMLELKHINKTTGLHVDYFKPGHPQALCVHSYKSMLPEMDRVMEFYKKIRVDGLVKREETPMTMTEYYEGRSDFLAYRHVNFGPRVKKLSQSSVESNPRPMVKITERFSRNPEKPADEDVAERLFLIVEERIQLRYHCRDDYITASKREFLRRMEVDSKGNKIIMTPEMCISYEVEPMEHTKKLLYQYETMNQLKNEEKLSRHQAWESELEVLEILKLREEEEEAHTLTISIYDTKRNEKSKEYREAMERVLHEEHLRQVEAQLDYLAPFLAQLPPGEKLTRWQAVRLKDECLSDFKQRLIDKANLIQARFEKETQELQKKQQWYQENQVTLTPEDENLYLSYCSQAMFRIRILEQRLNRHKELAPLKYLALEEKLYKDPRLIDFVKVFV</sequence>
<comment type="function">
    <text evidence="1 8">Component of the nexin-dynein regulatory complex (N-DRC) a key regulator of ciliary/flagellar motility which maintains the alignment and integrity of the distal axoneme and regulates microtubule sliding in motile axonemes (By similarity). Essential for male fertility, sperm head morphogenesis and sperm flagellum formation (PubMed:31961863). Not required for ciliogenesis in the brain and trachea (PubMed:31961863).</text>
</comment>
<comment type="subunit">
    <text evidence="1 7 8">Component of the nexin-dynein regulatory complex (N-DRC) (By similarity). Interacts with TCTE1/DRC5 (PubMed:28630322, PubMed:31961863). Interacts with DRC3 and GAS8/DRC4 (PubMed:31961863).</text>
</comment>
<comment type="subcellular location">
    <subcellularLocation>
        <location evidence="1">Cell projection</location>
        <location evidence="1">Cilium</location>
        <location evidence="1">Flagellum</location>
    </subcellularLocation>
    <subcellularLocation>
        <location evidence="1">Cytoplasm</location>
        <location evidence="1">Cytoskeleton</location>
        <location evidence="1">Cilium axoneme</location>
    </subcellularLocation>
    <subcellularLocation>
        <location evidence="1">Cytoplasm</location>
        <location evidence="1">Cytoskeleton</location>
        <location evidence="1">Flagellum axoneme</location>
    </subcellularLocation>
    <text evidence="1">Associated with the outer doublet microtubules (OD).</text>
</comment>
<comment type="alternative products">
    <event type="alternative splicing"/>
    <isoform>
        <id>Q6V3W6-1</id>
        <name>1</name>
        <name>SRG-L</name>
        <sequence type="displayed"/>
    </isoform>
    <isoform>
        <id>Q6V3W6-2</id>
        <name>2</name>
        <name>SRG-S</name>
        <sequence type="described" ref="VSP_023440 VSP_023441"/>
    </isoform>
</comment>
<comment type="tissue specificity">
    <molecule>Isoform 1</molecule>
    <text evidence="4 5">Expressed in diplotene and pachytene spermytocytes, and in round and elongating spermatids (at protein level). Strongly expressed in spleen and testis, faintly expressed in kidney, ovary and thymus.</text>
</comment>
<comment type="tissue specificity">
    <text evidence="6 8">Abundantly expressed in the testis and is weakly expressed in the brain, thymus, lung and ovary (PubMed:31961863). Expressed in ciliated cells (PubMed:17971504).</text>
</comment>
<comment type="disruption phenotype">
    <text evidence="8">Male mice were infertile due to their short immotile spermatozoa (PubMed:31961863). Axoneme formation and manchette removal are impaired in spermatids (PubMed:31961863). No morphological abnormalities seen in multicilia of ependymal and tracheal epithelia and cilia motility is not impaired in ependymal cilia (PubMed:31961863).</text>
</comment>
<comment type="similarity">
    <text evidence="10">Belongs to the DRC7 family.</text>
</comment>
<evidence type="ECO:0000250" key="1">
    <source>
        <dbReference type="UniProtKB" id="A8JAM0"/>
    </source>
</evidence>
<evidence type="ECO:0000255" key="2"/>
<evidence type="ECO:0000256" key="3">
    <source>
        <dbReference type="SAM" id="MobiDB-lite"/>
    </source>
</evidence>
<evidence type="ECO:0000269" key="4">
    <source>
    </source>
</evidence>
<evidence type="ECO:0000269" key="5">
    <source>
    </source>
</evidence>
<evidence type="ECO:0000269" key="6">
    <source>
    </source>
</evidence>
<evidence type="ECO:0000269" key="7">
    <source>
    </source>
</evidence>
<evidence type="ECO:0000269" key="8">
    <source>
    </source>
</evidence>
<evidence type="ECO:0000303" key="9">
    <source>
    </source>
</evidence>
<evidence type="ECO:0000305" key="10"/>
<feature type="chain" id="PRO_0000279436" description="Dynein regulatory complex subunit 7">
    <location>
        <begin position="1"/>
        <end position="876"/>
    </location>
</feature>
<feature type="region of interest" description="Disordered" evidence="3">
    <location>
        <begin position="1"/>
        <end position="40"/>
    </location>
</feature>
<feature type="region of interest" description="Disordered" evidence="3">
    <location>
        <begin position="385"/>
        <end position="412"/>
    </location>
</feature>
<feature type="coiled-coil region" evidence="2">
    <location>
        <begin position="1"/>
        <end position="33"/>
    </location>
</feature>
<feature type="coiled-coil region" evidence="2">
    <location>
        <begin position="258"/>
        <end position="295"/>
    </location>
</feature>
<feature type="coiled-coil region" evidence="2">
    <location>
        <begin position="679"/>
        <end position="710"/>
    </location>
</feature>
<feature type="coiled-coil region" evidence="2">
    <location>
        <begin position="784"/>
        <end position="809"/>
    </location>
</feature>
<feature type="compositionally biased region" description="Basic and acidic residues" evidence="3">
    <location>
        <begin position="17"/>
        <end position="40"/>
    </location>
</feature>
<feature type="compositionally biased region" description="Acidic residues" evidence="3">
    <location>
        <begin position="387"/>
        <end position="407"/>
    </location>
</feature>
<feature type="splice variant" id="VSP_023440" description="In isoform 2." evidence="9">
    <original>EAEKAKPD</original>
    <variation>VGLHDTAL</variation>
    <location>
        <begin position="288"/>
        <end position="295"/>
    </location>
</feature>
<feature type="splice variant" id="VSP_023441" description="In isoform 2." evidence="9">
    <location>
        <begin position="296"/>
        <end position="876"/>
    </location>
</feature>
<feature type="sequence conflict" description="In Ref. 2; AAQ55489." evidence="10" ref="2">
    <location>
        <position position="9"/>
    </location>
</feature>
<feature type="sequence conflict" description="In Ref. 2; AAQ55489." evidence="10" ref="2">
    <original>D</original>
    <variation>G</variation>
    <location>
        <position position="603"/>
    </location>
</feature>
<proteinExistence type="evidence at protein level"/>